<evidence type="ECO:0000255" key="1">
    <source>
        <dbReference type="HAMAP-Rule" id="MF_00104"/>
    </source>
</evidence>
<keyword id="KW-0963">Cytoplasm</keyword>
<keyword id="KW-0255">Endonuclease</keyword>
<keyword id="KW-0378">Hydrolase</keyword>
<keyword id="KW-0460">Magnesium</keyword>
<keyword id="KW-0479">Metal-binding</keyword>
<keyword id="KW-0507">mRNA processing</keyword>
<keyword id="KW-0540">Nuclease</keyword>
<keyword id="KW-0694">RNA-binding</keyword>
<keyword id="KW-0698">rRNA processing</keyword>
<keyword id="KW-0699">rRNA-binding</keyword>
<keyword id="KW-0819">tRNA processing</keyword>
<reference key="1">
    <citation type="submission" date="2007-04" db="EMBL/GenBank/DDBJ databases">
        <title>Complete sequence of chromosome of Rhodobacter sphaeroides ATCC 17025.</title>
        <authorList>
            <consortium name="US DOE Joint Genome Institute"/>
            <person name="Copeland A."/>
            <person name="Lucas S."/>
            <person name="Lapidus A."/>
            <person name="Barry K."/>
            <person name="Detter J.C."/>
            <person name="Glavina del Rio T."/>
            <person name="Hammon N."/>
            <person name="Israni S."/>
            <person name="Dalin E."/>
            <person name="Tice H."/>
            <person name="Pitluck S."/>
            <person name="Chertkov O."/>
            <person name="Brettin T."/>
            <person name="Bruce D."/>
            <person name="Han C."/>
            <person name="Schmutz J."/>
            <person name="Larimer F."/>
            <person name="Land M."/>
            <person name="Hauser L."/>
            <person name="Kyrpides N."/>
            <person name="Kim E."/>
            <person name="Richardson P."/>
            <person name="Mackenzie C."/>
            <person name="Choudhary M."/>
            <person name="Donohue T.J."/>
            <person name="Kaplan S."/>
        </authorList>
    </citation>
    <scope>NUCLEOTIDE SEQUENCE [LARGE SCALE GENOMIC DNA]</scope>
    <source>
        <strain>ATCC 17025 / ATH 2.4.3</strain>
    </source>
</reference>
<accession>A4WVP5</accession>
<feature type="chain" id="PRO_1000075799" description="Ribonuclease 3">
    <location>
        <begin position="1"/>
        <end position="229"/>
    </location>
</feature>
<feature type="domain" description="RNase III" evidence="1">
    <location>
        <begin position="7"/>
        <end position="132"/>
    </location>
</feature>
<feature type="domain" description="DRBM" evidence="1">
    <location>
        <begin position="157"/>
        <end position="226"/>
    </location>
</feature>
<feature type="active site" evidence="1">
    <location>
        <position position="49"/>
    </location>
</feature>
<feature type="active site" evidence="1">
    <location>
        <position position="121"/>
    </location>
</feature>
<feature type="binding site" evidence="1">
    <location>
        <position position="45"/>
    </location>
    <ligand>
        <name>Mg(2+)</name>
        <dbReference type="ChEBI" id="CHEBI:18420"/>
    </ligand>
</feature>
<feature type="binding site" evidence="1">
    <location>
        <position position="118"/>
    </location>
    <ligand>
        <name>Mg(2+)</name>
        <dbReference type="ChEBI" id="CHEBI:18420"/>
    </ligand>
</feature>
<feature type="binding site" evidence="1">
    <location>
        <position position="121"/>
    </location>
    <ligand>
        <name>Mg(2+)</name>
        <dbReference type="ChEBI" id="CHEBI:18420"/>
    </ligand>
</feature>
<proteinExistence type="inferred from homology"/>
<dbReference type="EC" id="3.1.26.3" evidence="1"/>
<dbReference type="EMBL" id="CP000661">
    <property type="protein sequence ID" value="ABP71459.1"/>
    <property type="molecule type" value="Genomic_DNA"/>
</dbReference>
<dbReference type="SMR" id="A4WVP5"/>
<dbReference type="STRING" id="349102.Rsph17025_2571"/>
<dbReference type="KEGG" id="rsq:Rsph17025_2571"/>
<dbReference type="eggNOG" id="COG0571">
    <property type="taxonomic scope" value="Bacteria"/>
</dbReference>
<dbReference type="HOGENOM" id="CLU_000907_1_1_5"/>
<dbReference type="BioCyc" id="RSPH349102:G1G8M-2650-MONOMER"/>
<dbReference type="GO" id="GO:0005737">
    <property type="term" value="C:cytoplasm"/>
    <property type="evidence" value="ECO:0007669"/>
    <property type="project" value="UniProtKB-SubCell"/>
</dbReference>
<dbReference type="GO" id="GO:0003725">
    <property type="term" value="F:double-stranded RNA binding"/>
    <property type="evidence" value="ECO:0007669"/>
    <property type="project" value="TreeGrafter"/>
</dbReference>
<dbReference type="GO" id="GO:0046872">
    <property type="term" value="F:metal ion binding"/>
    <property type="evidence" value="ECO:0007669"/>
    <property type="project" value="UniProtKB-KW"/>
</dbReference>
<dbReference type="GO" id="GO:0004525">
    <property type="term" value="F:ribonuclease III activity"/>
    <property type="evidence" value="ECO:0007669"/>
    <property type="project" value="UniProtKB-UniRule"/>
</dbReference>
<dbReference type="GO" id="GO:0019843">
    <property type="term" value="F:rRNA binding"/>
    <property type="evidence" value="ECO:0007669"/>
    <property type="project" value="UniProtKB-KW"/>
</dbReference>
<dbReference type="GO" id="GO:0006397">
    <property type="term" value="P:mRNA processing"/>
    <property type="evidence" value="ECO:0007669"/>
    <property type="project" value="UniProtKB-UniRule"/>
</dbReference>
<dbReference type="GO" id="GO:0010468">
    <property type="term" value="P:regulation of gene expression"/>
    <property type="evidence" value="ECO:0007669"/>
    <property type="project" value="TreeGrafter"/>
</dbReference>
<dbReference type="GO" id="GO:0006364">
    <property type="term" value="P:rRNA processing"/>
    <property type="evidence" value="ECO:0007669"/>
    <property type="project" value="UniProtKB-UniRule"/>
</dbReference>
<dbReference type="GO" id="GO:0008033">
    <property type="term" value="P:tRNA processing"/>
    <property type="evidence" value="ECO:0007669"/>
    <property type="project" value="UniProtKB-KW"/>
</dbReference>
<dbReference type="CDD" id="cd10845">
    <property type="entry name" value="DSRM_RNAse_III_family"/>
    <property type="match status" value="1"/>
</dbReference>
<dbReference type="CDD" id="cd00593">
    <property type="entry name" value="RIBOc"/>
    <property type="match status" value="1"/>
</dbReference>
<dbReference type="FunFam" id="1.10.1520.10:FF:000001">
    <property type="entry name" value="Ribonuclease 3"/>
    <property type="match status" value="1"/>
</dbReference>
<dbReference type="Gene3D" id="3.30.160.20">
    <property type="match status" value="1"/>
</dbReference>
<dbReference type="Gene3D" id="1.10.1520.10">
    <property type="entry name" value="Ribonuclease III domain"/>
    <property type="match status" value="1"/>
</dbReference>
<dbReference type="HAMAP" id="MF_00104">
    <property type="entry name" value="RNase_III"/>
    <property type="match status" value="1"/>
</dbReference>
<dbReference type="InterPro" id="IPR014720">
    <property type="entry name" value="dsRBD_dom"/>
</dbReference>
<dbReference type="InterPro" id="IPR011907">
    <property type="entry name" value="RNase_III"/>
</dbReference>
<dbReference type="InterPro" id="IPR000999">
    <property type="entry name" value="RNase_III_dom"/>
</dbReference>
<dbReference type="InterPro" id="IPR036389">
    <property type="entry name" value="RNase_III_sf"/>
</dbReference>
<dbReference type="NCBIfam" id="TIGR02191">
    <property type="entry name" value="RNaseIII"/>
    <property type="match status" value="1"/>
</dbReference>
<dbReference type="PANTHER" id="PTHR11207:SF0">
    <property type="entry name" value="RIBONUCLEASE 3"/>
    <property type="match status" value="1"/>
</dbReference>
<dbReference type="PANTHER" id="PTHR11207">
    <property type="entry name" value="RIBONUCLEASE III"/>
    <property type="match status" value="1"/>
</dbReference>
<dbReference type="Pfam" id="PF00035">
    <property type="entry name" value="dsrm"/>
    <property type="match status" value="1"/>
</dbReference>
<dbReference type="Pfam" id="PF14622">
    <property type="entry name" value="Ribonucleas_3_3"/>
    <property type="match status" value="1"/>
</dbReference>
<dbReference type="SMART" id="SM00358">
    <property type="entry name" value="DSRM"/>
    <property type="match status" value="1"/>
</dbReference>
<dbReference type="SMART" id="SM00535">
    <property type="entry name" value="RIBOc"/>
    <property type="match status" value="1"/>
</dbReference>
<dbReference type="SUPFAM" id="SSF54768">
    <property type="entry name" value="dsRNA-binding domain-like"/>
    <property type="match status" value="1"/>
</dbReference>
<dbReference type="SUPFAM" id="SSF69065">
    <property type="entry name" value="RNase III domain-like"/>
    <property type="match status" value="1"/>
</dbReference>
<dbReference type="PROSITE" id="PS50137">
    <property type="entry name" value="DS_RBD"/>
    <property type="match status" value="1"/>
</dbReference>
<dbReference type="PROSITE" id="PS00517">
    <property type="entry name" value="RNASE_3_1"/>
    <property type="match status" value="1"/>
</dbReference>
<dbReference type="PROSITE" id="PS50142">
    <property type="entry name" value="RNASE_3_2"/>
    <property type="match status" value="1"/>
</dbReference>
<gene>
    <name evidence="1" type="primary">rnc</name>
    <name type="ordered locus">Rsph17025_2571</name>
</gene>
<sequence length="229" mass="24826">MKLSTDLRAFESRIGHAFREPDRLLRAVTHASLSSATRPDNQRLEFLGDRVLGLVMAEALLAADKAATEGQLAPRFNALVRKETCAAVAREVGLGDVLKLGRSEMMSGGRRKEALLGDALEAVIAAVYLDAGFEAARRLVLRLWGERIAQVEADARDAKTALQEWAQARGLPPPCYEAVDRSGPDHAPIFTVEVRLGNGETERSAAGTKRVAEQAAARALLARMEARDD</sequence>
<name>RNC_CERS5</name>
<comment type="function">
    <text evidence="1">Digests double-stranded RNA. Involved in the processing of primary rRNA transcript to yield the immediate precursors to the large and small rRNAs (23S and 16S). Processes some mRNAs, and tRNAs when they are encoded in the rRNA operon. Processes pre-crRNA and tracrRNA of type II CRISPR loci if present in the organism.</text>
</comment>
<comment type="catalytic activity">
    <reaction evidence="1">
        <text>Endonucleolytic cleavage to 5'-phosphomonoester.</text>
        <dbReference type="EC" id="3.1.26.3"/>
    </reaction>
</comment>
<comment type="cofactor">
    <cofactor evidence="1">
        <name>Mg(2+)</name>
        <dbReference type="ChEBI" id="CHEBI:18420"/>
    </cofactor>
</comment>
<comment type="subunit">
    <text evidence="1">Homodimer.</text>
</comment>
<comment type="subcellular location">
    <subcellularLocation>
        <location evidence="1">Cytoplasm</location>
    </subcellularLocation>
</comment>
<comment type="similarity">
    <text evidence="1">Belongs to the ribonuclease III family.</text>
</comment>
<organism>
    <name type="scientific">Cereibacter sphaeroides (strain ATCC 17025 / ATH 2.4.3)</name>
    <name type="common">Rhodobacter sphaeroides</name>
    <dbReference type="NCBI Taxonomy" id="349102"/>
    <lineage>
        <taxon>Bacteria</taxon>
        <taxon>Pseudomonadati</taxon>
        <taxon>Pseudomonadota</taxon>
        <taxon>Alphaproteobacteria</taxon>
        <taxon>Rhodobacterales</taxon>
        <taxon>Paracoccaceae</taxon>
        <taxon>Cereibacter</taxon>
    </lineage>
</organism>
<protein>
    <recommendedName>
        <fullName evidence="1">Ribonuclease 3</fullName>
        <ecNumber evidence="1">3.1.26.3</ecNumber>
    </recommendedName>
    <alternativeName>
        <fullName evidence="1">Ribonuclease III</fullName>
        <shortName evidence="1">RNase III</shortName>
    </alternativeName>
</protein>